<reference key="1">
    <citation type="submission" date="2009-04" db="EMBL/GenBank/DDBJ databases">
        <title>Genome sequence of Bacillus anthracis A0248.</title>
        <authorList>
            <person name="Dodson R.J."/>
            <person name="Munk A.C."/>
            <person name="Bruce D."/>
            <person name="Detter C."/>
            <person name="Tapia R."/>
            <person name="Sutton G."/>
            <person name="Sims D."/>
            <person name="Brettin T."/>
        </authorList>
    </citation>
    <scope>NUCLEOTIDE SEQUENCE [LARGE SCALE GENOMIC DNA]</scope>
    <source>
        <strain>A0248</strain>
    </source>
</reference>
<gene>
    <name evidence="1" type="primary">aroK</name>
    <name type="ordered locus">BAA_4475</name>
</gene>
<evidence type="ECO:0000255" key="1">
    <source>
        <dbReference type="HAMAP-Rule" id="MF_00109"/>
    </source>
</evidence>
<feature type="chain" id="PRO_1000119043" description="Shikimate kinase">
    <location>
        <begin position="1"/>
        <end position="165"/>
    </location>
</feature>
<feature type="binding site" evidence="1">
    <location>
        <begin position="11"/>
        <end position="16"/>
    </location>
    <ligand>
        <name>ATP</name>
        <dbReference type="ChEBI" id="CHEBI:30616"/>
    </ligand>
</feature>
<feature type="binding site" evidence="1">
    <location>
        <position position="15"/>
    </location>
    <ligand>
        <name>Mg(2+)</name>
        <dbReference type="ChEBI" id="CHEBI:18420"/>
    </ligand>
</feature>
<feature type="binding site" evidence="1">
    <location>
        <position position="33"/>
    </location>
    <ligand>
        <name>substrate</name>
    </ligand>
</feature>
<feature type="binding site" evidence="1">
    <location>
        <position position="57"/>
    </location>
    <ligand>
        <name>substrate</name>
    </ligand>
</feature>
<feature type="binding site" evidence="1">
    <location>
        <position position="78"/>
    </location>
    <ligand>
        <name>substrate</name>
    </ligand>
</feature>
<feature type="binding site" evidence="1">
    <location>
        <position position="116"/>
    </location>
    <ligand>
        <name>ATP</name>
        <dbReference type="ChEBI" id="CHEBI:30616"/>
    </ligand>
</feature>
<feature type="binding site" evidence="1">
    <location>
        <position position="134"/>
    </location>
    <ligand>
        <name>substrate</name>
    </ligand>
</feature>
<proteinExistence type="inferred from homology"/>
<organism>
    <name type="scientific">Bacillus anthracis (strain A0248)</name>
    <dbReference type="NCBI Taxonomy" id="592021"/>
    <lineage>
        <taxon>Bacteria</taxon>
        <taxon>Bacillati</taxon>
        <taxon>Bacillota</taxon>
        <taxon>Bacilli</taxon>
        <taxon>Bacillales</taxon>
        <taxon>Bacillaceae</taxon>
        <taxon>Bacillus</taxon>
        <taxon>Bacillus cereus group</taxon>
    </lineage>
</organism>
<dbReference type="EC" id="2.7.1.71" evidence="1"/>
<dbReference type="EMBL" id="CP001598">
    <property type="protein sequence ID" value="ACQ48024.1"/>
    <property type="molecule type" value="Genomic_DNA"/>
</dbReference>
<dbReference type="RefSeq" id="WP_000836640.1">
    <property type="nucleotide sequence ID" value="NC_012659.1"/>
</dbReference>
<dbReference type="SMR" id="C3P8E3"/>
<dbReference type="GeneID" id="45024114"/>
<dbReference type="KEGG" id="bai:BAA_4475"/>
<dbReference type="HOGENOM" id="CLU_057607_4_3_9"/>
<dbReference type="UniPathway" id="UPA00053">
    <property type="reaction ID" value="UER00088"/>
</dbReference>
<dbReference type="GO" id="GO:0005829">
    <property type="term" value="C:cytosol"/>
    <property type="evidence" value="ECO:0007669"/>
    <property type="project" value="TreeGrafter"/>
</dbReference>
<dbReference type="GO" id="GO:0005524">
    <property type="term" value="F:ATP binding"/>
    <property type="evidence" value="ECO:0007669"/>
    <property type="project" value="UniProtKB-UniRule"/>
</dbReference>
<dbReference type="GO" id="GO:0000287">
    <property type="term" value="F:magnesium ion binding"/>
    <property type="evidence" value="ECO:0007669"/>
    <property type="project" value="UniProtKB-UniRule"/>
</dbReference>
<dbReference type="GO" id="GO:0004765">
    <property type="term" value="F:shikimate kinase activity"/>
    <property type="evidence" value="ECO:0007669"/>
    <property type="project" value="UniProtKB-UniRule"/>
</dbReference>
<dbReference type="GO" id="GO:0008652">
    <property type="term" value="P:amino acid biosynthetic process"/>
    <property type="evidence" value="ECO:0007669"/>
    <property type="project" value="UniProtKB-KW"/>
</dbReference>
<dbReference type="GO" id="GO:0009073">
    <property type="term" value="P:aromatic amino acid family biosynthetic process"/>
    <property type="evidence" value="ECO:0007669"/>
    <property type="project" value="UniProtKB-KW"/>
</dbReference>
<dbReference type="GO" id="GO:0009423">
    <property type="term" value="P:chorismate biosynthetic process"/>
    <property type="evidence" value="ECO:0007669"/>
    <property type="project" value="UniProtKB-UniRule"/>
</dbReference>
<dbReference type="CDD" id="cd00464">
    <property type="entry name" value="SK"/>
    <property type="match status" value="1"/>
</dbReference>
<dbReference type="Gene3D" id="3.40.50.300">
    <property type="entry name" value="P-loop containing nucleotide triphosphate hydrolases"/>
    <property type="match status" value="1"/>
</dbReference>
<dbReference type="HAMAP" id="MF_00109">
    <property type="entry name" value="Shikimate_kinase"/>
    <property type="match status" value="1"/>
</dbReference>
<dbReference type="InterPro" id="IPR027417">
    <property type="entry name" value="P-loop_NTPase"/>
</dbReference>
<dbReference type="InterPro" id="IPR031322">
    <property type="entry name" value="Shikimate/glucono_kinase"/>
</dbReference>
<dbReference type="InterPro" id="IPR000623">
    <property type="entry name" value="Shikimate_kinase/TSH1"/>
</dbReference>
<dbReference type="PANTHER" id="PTHR21087">
    <property type="entry name" value="SHIKIMATE KINASE"/>
    <property type="match status" value="1"/>
</dbReference>
<dbReference type="PANTHER" id="PTHR21087:SF16">
    <property type="entry name" value="SHIKIMATE KINASE 1, CHLOROPLASTIC"/>
    <property type="match status" value="1"/>
</dbReference>
<dbReference type="Pfam" id="PF01202">
    <property type="entry name" value="SKI"/>
    <property type="match status" value="1"/>
</dbReference>
<dbReference type="PRINTS" id="PR01100">
    <property type="entry name" value="SHIKIMTKNASE"/>
</dbReference>
<dbReference type="SUPFAM" id="SSF52540">
    <property type="entry name" value="P-loop containing nucleoside triphosphate hydrolases"/>
    <property type="match status" value="1"/>
</dbReference>
<sequence>MKSIYITGYMGAGKTTIGKALSKELHMDVVDTDQKIEEKQGKVIRDIFAEEGEMAFREYESEMLCSLPVDNVIITTGGGIVEREENRKWMKENGTVVYLYCDPHVIAERLREDTTRPLFQKKDIDAFVTKFESRRAYYEEAHIHIDTTNKSVKQIMNELKEKINE</sequence>
<protein>
    <recommendedName>
        <fullName evidence="1">Shikimate kinase</fullName>
        <shortName evidence="1">SK</shortName>
        <ecNumber evidence="1">2.7.1.71</ecNumber>
    </recommendedName>
</protein>
<accession>C3P8E3</accession>
<keyword id="KW-0028">Amino-acid biosynthesis</keyword>
<keyword id="KW-0057">Aromatic amino acid biosynthesis</keyword>
<keyword id="KW-0067">ATP-binding</keyword>
<keyword id="KW-0963">Cytoplasm</keyword>
<keyword id="KW-0418">Kinase</keyword>
<keyword id="KW-0460">Magnesium</keyword>
<keyword id="KW-0479">Metal-binding</keyword>
<keyword id="KW-0547">Nucleotide-binding</keyword>
<keyword id="KW-0808">Transferase</keyword>
<name>AROK_BACAA</name>
<comment type="function">
    <text evidence="1">Catalyzes the specific phosphorylation of the 3-hydroxyl group of shikimic acid using ATP as a cosubstrate.</text>
</comment>
<comment type="catalytic activity">
    <reaction evidence="1">
        <text>shikimate + ATP = 3-phosphoshikimate + ADP + H(+)</text>
        <dbReference type="Rhea" id="RHEA:13121"/>
        <dbReference type="ChEBI" id="CHEBI:15378"/>
        <dbReference type="ChEBI" id="CHEBI:30616"/>
        <dbReference type="ChEBI" id="CHEBI:36208"/>
        <dbReference type="ChEBI" id="CHEBI:145989"/>
        <dbReference type="ChEBI" id="CHEBI:456216"/>
        <dbReference type="EC" id="2.7.1.71"/>
    </reaction>
</comment>
<comment type="cofactor">
    <cofactor evidence="1">
        <name>Mg(2+)</name>
        <dbReference type="ChEBI" id="CHEBI:18420"/>
    </cofactor>
    <text evidence="1">Binds 1 Mg(2+) ion per subunit.</text>
</comment>
<comment type="pathway">
    <text evidence="1">Metabolic intermediate biosynthesis; chorismate biosynthesis; chorismate from D-erythrose 4-phosphate and phosphoenolpyruvate: step 5/7.</text>
</comment>
<comment type="subunit">
    <text evidence="1">Monomer.</text>
</comment>
<comment type="subcellular location">
    <subcellularLocation>
        <location evidence="1">Cytoplasm</location>
    </subcellularLocation>
</comment>
<comment type="similarity">
    <text evidence="1">Belongs to the shikimate kinase family.</text>
</comment>